<feature type="chain" id="PRO_0000102391" description="Lipoyl synthase">
    <location>
        <begin position="1"/>
        <end position="286"/>
    </location>
</feature>
<feature type="domain" description="Radical SAM core" evidence="2">
    <location>
        <begin position="46"/>
        <end position="260"/>
    </location>
</feature>
<feature type="binding site" evidence="1">
    <location>
        <position position="34"/>
    </location>
    <ligand>
        <name>[4Fe-4S] cluster</name>
        <dbReference type="ChEBI" id="CHEBI:49883"/>
        <label>1</label>
    </ligand>
</feature>
<feature type="binding site" evidence="1">
    <location>
        <position position="39"/>
    </location>
    <ligand>
        <name>[4Fe-4S] cluster</name>
        <dbReference type="ChEBI" id="CHEBI:49883"/>
        <label>1</label>
    </ligand>
</feature>
<feature type="binding site" evidence="1">
    <location>
        <position position="45"/>
    </location>
    <ligand>
        <name>[4Fe-4S] cluster</name>
        <dbReference type="ChEBI" id="CHEBI:49883"/>
        <label>1</label>
    </ligand>
</feature>
<feature type="binding site" evidence="1">
    <location>
        <position position="60"/>
    </location>
    <ligand>
        <name>[4Fe-4S] cluster</name>
        <dbReference type="ChEBI" id="CHEBI:49883"/>
        <label>2</label>
        <note>4Fe-4S-S-AdoMet</note>
    </ligand>
</feature>
<feature type="binding site" evidence="1">
    <location>
        <position position="64"/>
    </location>
    <ligand>
        <name>[4Fe-4S] cluster</name>
        <dbReference type="ChEBI" id="CHEBI:49883"/>
        <label>2</label>
        <note>4Fe-4S-S-AdoMet</note>
    </ligand>
</feature>
<feature type="binding site" evidence="1">
    <location>
        <position position="67"/>
    </location>
    <ligand>
        <name>[4Fe-4S] cluster</name>
        <dbReference type="ChEBI" id="CHEBI:49883"/>
        <label>2</label>
        <note>4Fe-4S-S-AdoMet</note>
    </ligand>
</feature>
<feature type="binding site" evidence="1">
    <location>
        <position position="271"/>
    </location>
    <ligand>
        <name>[4Fe-4S] cluster</name>
        <dbReference type="ChEBI" id="CHEBI:49883"/>
        <label>1</label>
    </ligand>
</feature>
<proteinExistence type="inferred from homology"/>
<accession>Q6L1L7</accession>
<reference key="1">
    <citation type="journal article" date="2004" name="Proc. Natl. Acad. Sci. U.S.A.">
        <title>Genome sequence of Picrophilus torridus and its implications for life around pH 0.</title>
        <authorList>
            <person name="Fuetterer O."/>
            <person name="Angelov A."/>
            <person name="Liesegang H."/>
            <person name="Gottschalk G."/>
            <person name="Schleper C."/>
            <person name="Schepers B."/>
            <person name="Dock C."/>
            <person name="Antranikian G."/>
            <person name="Liebl W."/>
        </authorList>
    </citation>
    <scope>NUCLEOTIDE SEQUENCE [LARGE SCALE GENOMIC DNA]</scope>
    <source>
        <strain>ATCC 700027 / DSM 9790 / JCM 10055 / NBRC 100828 / KAW 2/3</strain>
    </source>
</reference>
<keyword id="KW-0004">4Fe-4S</keyword>
<keyword id="KW-0963">Cytoplasm</keyword>
<keyword id="KW-0408">Iron</keyword>
<keyword id="KW-0411">Iron-sulfur</keyword>
<keyword id="KW-0479">Metal-binding</keyword>
<keyword id="KW-0949">S-adenosyl-L-methionine</keyword>
<keyword id="KW-0808">Transferase</keyword>
<sequence length="286" mass="32253">MNAGPINYKVKLPSGERYTFIKSTLSARNLYTVCEEAHCPNIAECWESGTATFMIMGSNCSRGCRFCAVTHGRMLPLDPMEPEKVYESVKMMNLDYVVITSVDRDDLPDKGSSHFAAVIRRLKDLKIKIEVLIPDFSGVHKFIDKIIDERPDVIAHNIETVRRLTKTVRDPRAGYDQSLNVLRYVKSRSNIITKSSIMLGLGETDDEVIETLHDLHDAGVDIVTIGQYLRPTKKQLEVKEYSPMERFKNLEESAYSIGFSFVASGPLVRTSYRAAEAFVKGGFKND</sequence>
<comment type="function">
    <text evidence="1">Catalyzes the radical-mediated insertion of two sulfur atoms into the C-6 and C-8 positions of the octanoyl moiety bound to the lipoyl domains of lipoate-dependent enzymes, thereby converting the octanoylated domains into lipoylated derivatives.</text>
</comment>
<comment type="catalytic activity">
    <reaction evidence="1">
        <text>[[Fe-S] cluster scaffold protein carrying a second [4Fe-4S](2+) cluster] + N(6)-octanoyl-L-lysyl-[protein] + 2 oxidized [2Fe-2S]-[ferredoxin] + 2 S-adenosyl-L-methionine + 4 H(+) = [[Fe-S] cluster scaffold protein] + N(6)-[(R)-dihydrolipoyl]-L-lysyl-[protein] + 4 Fe(3+) + 2 hydrogen sulfide + 2 5'-deoxyadenosine + 2 L-methionine + 2 reduced [2Fe-2S]-[ferredoxin]</text>
        <dbReference type="Rhea" id="RHEA:16585"/>
        <dbReference type="Rhea" id="RHEA-COMP:9928"/>
        <dbReference type="Rhea" id="RHEA-COMP:10000"/>
        <dbReference type="Rhea" id="RHEA-COMP:10001"/>
        <dbReference type="Rhea" id="RHEA-COMP:10475"/>
        <dbReference type="Rhea" id="RHEA-COMP:14568"/>
        <dbReference type="Rhea" id="RHEA-COMP:14569"/>
        <dbReference type="ChEBI" id="CHEBI:15378"/>
        <dbReference type="ChEBI" id="CHEBI:17319"/>
        <dbReference type="ChEBI" id="CHEBI:29034"/>
        <dbReference type="ChEBI" id="CHEBI:29919"/>
        <dbReference type="ChEBI" id="CHEBI:33722"/>
        <dbReference type="ChEBI" id="CHEBI:33737"/>
        <dbReference type="ChEBI" id="CHEBI:33738"/>
        <dbReference type="ChEBI" id="CHEBI:57844"/>
        <dbReference type="ChEBI" id="CHEBI:59789"/>
        <dbReference type="ChEBI" id="CHEBI:78809"/>
        <dbReference type="ChEBI" id="CHEBI:83100"/>
        <dbReference type="EC" id="2.8.1.8"/>
    </reaction>
</comment>
<comment type="cofactor">
    <cofactor evidence="1">
        <name>[4Fe-4S] cluster</name>
        <dbReference type="ChEBI" id="CHEBI:49883"/>
    </cofactor>
    <text evidence="1">Binds 2 [4Fe-4S] clusters per subunit. One cluster is coordinated with 3 cysteines and an exchangeable S-adenosyl-L-methionine.</text>
</comment>
<comment type="pathway">
    <text evidence="1">Protein modification; protein lipoylation via endogenous pathway; protein N(6)-(lipoyl)lysine from octanoyl-[acyl-carrier-protein]: step 2/2.</text>
</comment>
<comment type="subcellular location">
    <subcellularLocation>
        <location evidence="1">Cytoplasm</location>
    </subcellularLocation>
</comment>
<comment type="similarity">
    <text evidence="1">Belongs to the radical SAM superfamily. Lipoyl synthase family.</text>
</comment>
<name>LIPA_PICTO</name>
<evidence type="ECO:0000255" key="1">
    <source>
        <dbReference type="HAMAP-Rule" id="MF_00206"/>
    </source>
</evidence>
<evidence type="ECO:0000255" key="2">
    <source>
        <dbReference type="PROSITE-ProRule" id="PRU01266"/>
    </source>
</evidence>
<organism>
    <name type="scientific">Picrophilus torridus (strain ATCC 700027 / DSM 9790 / JCM 10055 / NBRC 100828 / KAW 2/3)</name>
    <dbReference type="NCBI Taxonomy" id="1122961"/>
    <lineage>
        <taxon>Archaea</taxon>
        <taxon>Methanobacteriati</taxon>
        <taxon>Thermoplasmatota</taxon>
        <taxon>Thermoplasmata</taxon>
        <taxon>Thermoplasmatales</taxon>
        <taxon>Picrophilaceae</taxon>
        <taxon>Picrophilus</taxon>
    </lineage>
</organism>
<gene>
    <name evidence="1" type="primary">lipA</name>
    <name type="ordered locus">PTO0550</name>
</gene>
<protein>
    <recommendedName>
        <fullName evidence="1">Lipoyl synthase</fullName>
        <ecNumber evidence="1">2.8.1.8</ecNumber>
    </recommendedName>
    <alternativeName>
        <fullName evidence="1">Lip-syn</fullName>
        <shortName evidence="1">LS</shortName>
    </alternativeName>
    <alternativeName>
        <fullName evidence="1">Lipoate synthase</fullName>
    </alternativeName>
    <alternativeName>
        <fullName evidence="1">Lipoic acid synthase</fullName>
    </alternativeName>
    <alternativeName>
        <fullName evidence="1">Sulfur insertion protein LipA</fullName>
    </alternativeName>
</protein>
<dbReference type="EC" id="2.8.1.8" evidence="1"/>
<dbReference type="EMBL" id="AE017261">
    <property type="protein sequence ID" value="AAT43135.1"/>
    <property type="molecule type" value="Genomic_DNA"/>
</dbReference>
<dbReference type="RefSeq" id="WP_011177351.1">
    <property type="nucleotide sequence ID" value="NZ_FWYE01000001.1"/>
</dbReference>
<dbReference type="SMR" id="Q6L1L7"/>
<dbReference type="FunCoup" id="Q6L1L7">
    <property type="interactions" value="194"/>
</dbReference>
<dbReference type="STRING" id="263820.PTO0550"/>
<dbReference type="PaxDb" id="263820-PTO0550"/>
<dbReference type="KEGG" id="pto:PTO0550"/>
<dbReference type="PATRIC" id="fig|263820.9.peg.578"/>
<dbReference type="eggNOG" id="arCOG00660">
    <property type="taxonomic scope" value="Archaea"/>
</dbReference>
<dbReference type="HOGENOM" id="CLU_033144_2_1_2"/>
<dbReference type="InParanoid" id="Q6L1L7"/>
<dbReference type="OrthoDB" id="145957at2157"/>
<dbReference type="UniPathway" id="UPA00538">
    <property type="reaction ID" value="UER00593"/>
</dbReference>
<dbReference type="Proteomes" id="UP000000438">
    <property type="component" value="Chromosome"/>
</dbReference>
<dbReference type="GO" id="GO:0005737">
    <property type="term" value="C:cytoplasm"/>
    <property type="evidence" value="ECO:0007669"/>
    <property type="project" value="UniProtKB-SubCell"/>
</dbReference>
<dbReference type="GO" id="GO:0051539">
    <property type="term" value="F:4 iron, 4 sulfur cluster binding"/>
    <property type="evidence" value="ECO:0007669"/>
    <property type="project" value="UniProtKB-UniRule"/>
</dbReference>
<dbReference type="GO" id="GO:0016992">
    <property type="term" value="F:lipoate synthase activity"/>
    <property type="evidence" value="ECO:0007669"/>
    <property type="project" value="UniProtKB-UniRule"/>
</dbReference>
<dbReference type="GO" id="GO:0046872">
    <property type="term" value="F:metal ion binding"/>
    <property type="evidence" value="ECO:0007669"/>
    <property type="project" value="UniProtKB-KW"/>
</dbReference>
<dbReference type="CDD" id="cd01335">
    <property type="entry name" value="Radical_SAM"/>
    <property type="match status" value="1"/>
</dbReference>
<dbReference type="Gene3D" id="3.20.20.70">
    <property type="entry name" value="Aldolase class I"/>
    <property type="match status" value="1"/>
</dbReference>
<dbReference type="HAMAP" id="MF_00206">
    <property type="entry name" value="Lipoyl_synth"/>
    <property type="match status" value="1"/>
</dbReference>
<dbReference type="InterPro" id="IPR013785">
    <property type="entry name" value="Aldolase_TIM"/>
</dbReference>
<dbReference type="InterPro" id="IPR006638">
    <property type="entry name" value="Elp3/MiaA/NifB-like_rSAM"/>
</dbReference>
<dbReference type="InterPro" id="IPR003698">
    <property type="entry name" value="Lipoyl_synth"/>
</dbReference>
<dbReference type="InterPro" id="IPR007197">
    <property type="entry name" value="rSAM"/>
</dbReference>
<dbReference type="NCBIfam" id="TIGR00510">
    <property type="entry name" value="lipA"/>
    <property type="match status" value="1"/>
</dbReference>
<dbReference type="NCBIfam" id="NF004019">
    <property type="entry name" value="PRK05481.1"/>
    <property type="match status" value="1"/>
</dbReference>
<dbReference type="NCBIfam" id="NF009544">
    <property type="entry name" value="PRK12928.1"/>
    <property type="match status" value="1"/>
</dbReference>
<dbReference type="PANTHER" id="PTHR10949">
    <property type="entry name" value="LIPOYL SYNTHASE"/>
    <property type="match status" value="1"/>
</dbReference>
<dbReference type="PANTHER" id="PTHR10949:SF0">
    <property type="entry name" value="LIPOYL SYNTHASE, MITOCHONDRIAL"/>
    <property type="match status" value="1"/>
</dbReference>
<dbReference type="Pfam" id="PF04055">
    <property type="entry name" value="Radical_SAM"/>
    <property type="match status" value="1"/>
</dbReference>
<dbReference type="PIRSF" id="PIRSF005963">
    <property type="entry name" value="Lipoyl_synth"/>
    <property type="match status" value="1"/>
</dbReference>
<dbReference type="SFLD" id="SFLDF00271">
    <property type="entry name" value="lipoyl_synthase"/>
    <property type="match status" value="1"/>
</dbReference>
<dbReference type="SFLD" id="SFLDS00029">
    <property type="entry name" value="Radical_SAM"/>
    <property type="match status" value="1"/>
</dbReference>
<dbReference type="SMART" id="SM00729">
    <property type="entry name" value="Elp3"/>
    <property type="match status" value="1"/>
</dbReference>
<dbReference type="SUPFAM" id="SSF102114">
    <property type="entry name" value="Radical SAM enzymes"/>
    <property type="match status" value="1"/>
</dbReference>
<dbReference type="PROSITE" id="PS51918">
    <property type="entry name" value="RADICAL_SAM"/>
    <property type="match status" value="1"/>
</dbReference>